<feature type="chain" id="PRO_0000431066" description="Kelch-like protein 41b">
    <location>
        <begin position="1"/>
        <end position="605"/>
    </location>
</feature>
<feature type="domain" description="BTB" evidence="4">
    <location>
        <begin position="32"/>
        <end position="102"/>
    </location>
</feature>
<feature type="domain" description="BACK" evidence="3">
    <location>
        <begin position="136"/>
        <end position="238"/>
    </location>
</feature>
<feature type="repeat" description="Kelch 1" evidence="3">
    <location>
        <begin position="345"/>
        <end position="397"/>
    </location>
</feature>
<feature type="repeat" description="Kelch 2" evidence="3">
    <location>
        <begin position="398"/>
        <end position="446"/>
    </location>
</feature>
<feature type="repeat" description="Kelch 3" evidence="3">
    <location>
        <begin position="447"/>
        <end position="494"/>
    </location>
</feature>
<feature type="repeat" description="Kelch 4" evidence="3">
    <location>
        <begin position="496"/>
        <end position="541"/>
    </location>
</feature>
<feature type="repeat" description="Kelch 5" evidence="3">
    <location>
        <begin position="543"/>
        <end position="598"/>
    </location>
</feature>
<feature type="sequence conflict" description="In Ref. 2; AAH54912." ref="2">
    <original>L</original>
    <variation>S</variation>
    <location>
        <position position="181"/>
    </location>
</feature>
<feature type="sequence conflict" description="In Ref. 2; AAH54912." ref="2">
    <original>E</original>
    <variation>K</variation>
    <location>
        <position position="266"/>
    </location>
</feature>
<sequence length="605" mass="68713">MDPKAIKEELRLFQSTLLQDGLKELLNENKFVDCTLKIGDRCFPCHRLIMAACSPYFRELFFSEDGKEKDIGKEVVLDDVDPNIMDMILQYLYSAEIDLVDDNVQEIFAVANRFQIPSVFTVCVNYLQQKLSMANCLAVFRLGLVLSVPRLAIAARDFIADRFETVSSEEEFLQLAPHELLALIGGDMLNVEKEEVVFESVMKWVRNDKANRVKSLAEAFDCIRFRLLPEKYFREKVETDDIIKGDPELLKKLQLVKDAFKGKLPEKKPKEKKEGEVNGEEEGEEMLPGFLNDNRRLGMYGRDLIVMINDTAAVAYDVVENECFLAAMAEQVPKNHVSLCTKKNQLFIVGGLFVDEESKESPLQCYFYQLDSFSSDWRALPPMPSPRCLFNLGESENLLFAIAGKDLQTNESLDSVMCFDTERMKWSETKKLPLHIHGHSVVSHNNLVYCIGGKTDDNKALSKMFVYNHKQSEWRELASMKTPRAMFGAVVHKGKIIVTGGVNEDGLTALSETYDFDTNKWDTFTEFPQERSSVNLVSSGGNLFSIGGFAIVELEDKNIGPSEITDIWQYEEDKKTWSGMLREMRYASGSSCVGMRLNAARMPKL</sequence>
<keyword id="KW-0963">Cytoplasm</keyword>
<keyword id="KW-0206">Cytoskeleton</keyword>
<keyword id="KW-0256">Endoplasmic reticulum</keyword>
<keyword id="KW-0880">Kelch repeat</keyword>
<keyword id="KW-0472">Membrane</keyword>
<keyword id="KW-1185">Reference proteome</keyword>
<keyword id="KW-0677">Repeat</keyword>
<keyword id="KW-0703">Sarcoplasmic reticulum</keyword>
<protein>
    <recommendedName>
        <fullName>Kelch-like protein 41b</fullName>
    </recommendedName>
    <alternativeName>
        <fullName>Kelch repeat and BTB domain-containing protein 10b</fullName>
    </alternativeName>
</protein>
<name>KL41B_DANRE</name>
<comment type="function">
    <text evidence="5">Involved in skeletal muscle development and maintenance.</text>
</comment>
<comment type="subcellular location">
    <subcellularLocation>
        <location evidence="2">Cytoplasm</location>
    </subcellularLocation>
    <subcellularLocation>
        <location evidence="1">Cytoplasm</location>
        <location evidence="1">Cytoskeleton</location>
    </subcellularLocation>
    <subcellularLocation>
        <location evidence="2">Sarcoplasmic reticulum membrane</location>
    </subcellularLocation>
    <subcellularLocation>
        <location evidence="2">Endoplasmic reticulum membrane</location>
    </subcellularLocation>
</comment>
<comment type="developmental stage">
    <text evidence="5">Expression is predominantly seen in striated muscles, and strong expression in heart and skeletal muscles is observed throughout development to at least 5 dpf.</text>
</comment>
<comment type="disruption phenotype">
    <text evidence="5">Knockdown of klhl41b result in reduced disorganized muscle without any other significant abnormalities. Knockdown of both genes (klhl41a and klhl41b) is lethal by 3 dpf. Double knockdown fish exhibit severely disorganized muscle compared to controls and either of the single knockdowns.</text>
</comment>
<organism>
    <name type="scientific">Danio rerio</name>
    <name type="common">Zebrafish</name>
    <name type="synonym">Brachydanio rerio</name>
    <dbReference type="NCBI Taxonomy" id="7955"/>
    <lineage>
        <taxon>Eukaryota</taxon>
        <taxon>Metazoa</taxon>
        <taxon>Chordata</taxon>
        <taxon>Craniata</taxon>
        <taxon>Vertebrata</taxon>
        <taxon>Euteleostomi</taxon>
        <taxon>Actinopterygii</taxon>
        <taxon>Neopterygii</taxon>
        <taxon>Teleostei</taxon>
        <taxon>Ostariophysi</taxon>
        <taxon>Cypriniformes</taxon>
        <taxon>Danionidae</taxon>
        <taxon>Danioninae</taxon>
        <taxon>Danio</taxon>
    </lineage>
</organism>
<dbReference type="EMBL" id="CABZ01067487">
    <property type="status" value="NOT_ANNOTATED_CDS"/>
    <property type="molecule type" value="Genomic_DNA"/>
</dbReference>
<dbReference type="EMBL" id="BC054912">
    <property type="protein sequence ID" value="AAH54912.1"/>
    <property type="molecule type" value="mRNA"/>
</dbReference>
<dbReference type="RefSeq" id="NP_945330.1">
    <property type="nucleotide sequence ID" value="NM_198979.1"/>
</dbReference>
<dbReference type="SMR" id="F1QEG2"/>
<dbReference type="FunCoup" id="F1QEG2">
    <property type="interactions" value="361"/>
</dbReference>
<dbReference type="STRING" id="7955.ENSDARP00000012238"/>
<dbReference type="PaxDb" id="7955-ENSDARP00000012238"/>
<dbReference type="Ensembl" id="ENSDART00000013588">
    <property type="protein sequence ID" value="ENSDARP00000012238"/>
    <property type="gene ID" value="ENSDARG00000006757"/>
</dbReference>
<dbReference type="GeneID" id="321064"/>
<dbReference type="KEGG" id="dre:321064"/>
<dbReference type="AGR" id="ZFIN:ZDB-GENE-030131-9875"/>
<dbReference type="CTD" id="321064"/>
<dbReference type="ZFIN" id="ZDB-GENE-030131-9875">
    <property type="gene designation" value="klhl41b"/>
</dbReference>
<dbReference type="eggNOG" id="KOG4441">
    <property type="taxonomic scope" value="Eukaryota"/>
</dbReference>
<dbReference type="HOGENOM" id="CLU_004253_14_4_1"/>
<dbReference type="InParanoid" id="F1QEG2"/>
<dbReference type="OMA" id="FQSYFFQ"/>
<dbReference type="OrthoDB" id="6359816at2759"/>
<dbReference type="PhylomeDB" id="F1QEG2"/>
<dbReference type="TreeFam" id="TF351653"/>
<dbReference type="Reactome" id="R-DRE-8951664">
    <property type="pathway name" value="Neddylation"/>
</dbReference>
<dbReference type="Reactome" id="R-DRE-983168">
    <property type="pathway name" value="Antigen processing: Ubiquitination &amp; Proteasome degradation"/>
</dbReference>
<dbReference type="PRO" id="PR:F1QEG2"/>
<dbReference type="Proteomes" id="UP000000437">
    <property type="component" value="Chromosome 6"/>
</dbReference>
<dbReference type="Bgee" id="ENSDARG00000006757">
    <property type="expression patterns" value="Expressed in muscle tissue and 21 other cell types or tissues"/>
</dbReference>
<dbReference type="GO" id="GO:0031463">
    <property type="term" value="C:Cul3-RING ubiquitin ligase complex"/>
    <property type="evidence" value="ECO:0000318"/>
    <property type="project" value="GO_Central"/>
</dbReference>
<dbReference type="GO" id="GO:0005737">
    <property type="term" value="C:cytoplasm"/>
    <property type="evidence" value="ECO:0000318"/>
    <property type="project" value="GO_Central"/>
</dbReference>
<dbReference type="GO" id="GO:0005856">
    <property type="term" value="C:cytoskeleton"/>
    <property type="evidence" value="ECO:0000318"/>
    <property type="project" value="GO_Central"/>
</dbReference>
<dbReference type="GO" id="GO:0031430">
    <property type="term" value="C:M band"/>
    <property type="evidence" value="ECO:0000318"/>
    <property type="project" value="GO_Central"/>
</dbReference>
<dbReference type="GO" id="GO:0033017">
    <property type="term" value="C:sarcoplasmic reticulum membrane"/>
    <property type="evidence" value="ECO:0000318"/>
    <property type="project" value="GO_Central"/>
</dbReference>
<dbReference type="GO" id="GO:1990756">
    <property type="term" value="F:ubiquitin-like ligase-substrate adaptor activity"/>
    <property type="evidence" value="ECO:0000318"/>
    <property type="project" value="GO_Central"/>
</dbReference>
<dbReference type="GO" id="GO:0043161">
    <property type="term" value="P:proteasome-mediated ubiquitin-dependent protein catabolic process"/>
    <property type="evidence" value="ECO:0000318"/>
    <property type="project" value="GO_Central"/>
</dbReference>
<dbReference type="GO" id="GO:0060297">
    <property type="term" value="P:regulation of sarcomere organization"/>
    <property type="evidence" value="ECO:0000316"/>
    <property type="project" value="ZFIN"/>
</dbReference>
<dbReference type="GO" id="GO:0045214">
    <property type="term" value="P:sarcomere organization"/>
    <property type="evidence" value="ECO:0000315"/>
    <property type="project" value="ZFIN"/>
</dbReference>
<dbReference type="GO" id="GO:0048741">
    <property type="term" value="P:skeletal muscle fiber development"/>
    <property type="evidence" value="ECO:0000315"/>
    <property type="project" value="ZFIN"/>
</dbReference>
<dbReference type="GO" id="GO:0036269">
    <property type="term" value="P:swimming behavior"/>
    <property type="evidence" value="ECO:0000316"/>
    <property type="project" value="ZFIN"/>
</dbReference>
<dbReference type="CDD" id="cd18517">
    <property type="entry name" value="BACK_KLHL41_KBTBD10"/>
    <property type="match status" value="1"/>
</dbReference>
<dbReference type="CDD" id="cd18341">
    <property type="entry name" value="BTB_POZ_KLHL41_KBTBD10"/>
    <property type="match status" value="1"/>
</dbReference>
<dbReference type="FunFam" id="3.30.710.10:FF:000006">
    <property type="entry name" value="Kelch repeat and BTB domain-containing 6"/>
    <property type="match status" value="1"/>
</dbReference>
<dbReference type="FunFam" id="1.25.40.420:FF:000001">
    <property type="entry name" value="Kelch-like family member 12"/>
    <property type="match status" value="1"/>
</dbReference>
<dbReference type="FunFam" id="2.120.10.80:FF:000025">
    <property type="entry name" value="Kelch-like family member 41"/>
    <property type="match status" value="1"/>
</dbReference>
<dbReference type="Gene3D" id="1.25.40.420">
    <property type="match status" value="1"/>
</dbReference>
<dbReference type="Gene3D" id="2.120.10.80">
    <property type="entry name" value="Kelch-type beta propeller"/>
    <property type="match status" value="1"/>
</dbReference>
<dbReference type="Gene3D" id="3.30.710.10">
    <property type="entry name" value="Potassium Channel Kv1.1, Chain A"/>
    <property type="match status" value="1"/>
</dbReference>
<dbReference type="InterPro" id="IPR011705">
    <property type="entry name" value="BACK"/>
</dbReference>
<dbReference type="InterPro" id="IPR017096">
    <property type="entry name" value="BTB-kelch_protein"/>
</dbReference>
<dbReference type="InterPro" id="IPR000210">
    <property type="entry name" value="BTB/POZ_dom"/>
</dbReference>
<dbReference type="InterPro" id="IPR015915">
    <property type="entry name" value="Kelch-typ_b-propeller"/>
</dbReference>
<dbReference type="InterPro" id="IPR006652">
    <property type="entry name" value="Kelch_1"/>
</dbReference>
<dbReference type="InterPro" id="IPR030571">
    <property type="entry name" value="KLHL41_KL41B_BTB_POZ_dom"/>
</dbReference>
<dbReference type="InterPro" id="IPR011333">
    <property type="entry name" value="SKP1/BTB/POZ_sf"/>
</dbReference>
<dbReference type="PANTHER" id="PTHR24412">
    <property type="entry name" value="KELCH PROTEIN"/>
    <property type="match status" value="1"/>
</dbReference>
<dbReference type="PANTHER" id="PTHR24412:SF146">
    <property type="entry name" value="KELCH-LIKE PROTEIN 41"/>
    <property type="match status" value="1"/>
</dbReference>
<dbReference type="Pfam" id="PF07707">
    <property type="entry name" value="BACK"/>
    <property type="match status" value="1"/>
</dbReference>
<dbReference type="Pfam" id="PF00651">
    <property type="entry name" value="BTB"/>
    <property type="match status" value="1"/>
</dbReference>
<dbReference type="Pfam" id="PF24681">
    <property type="entry name" value="Kelch_KLHDC2_KLHL20_DRC7"/>
    <property type="match status" value="1"/>
</dbReference>
<dbReference type="PIRSF" id="PIRSF037037">
    <property type="entry name" value="Kelch-like_protein_gigaxonin"/>
    <property type="match status" value="1"/>
</dbReference>
<dbReference type="SMART" id="SM00875">
    <property type="entry name" value="BACK"/>
    <property type="match status" value="1"/>
</dbReference>
<dbReference type="SMART" id="SM00225">
    <property type="entry name" value="BTB"/>
    <property type="match status" value="1"/>
</dbReference>
<dbReference type="SMART" id="SM00612">
    <property type="entry name" value="Kelch"/>
    <property type="match status" value="4"/>
</dbReference>
<dbReference type="SUPFAM" id="SSF117281">
    <property type="entry name" value="Kelch motif"/>
    <property type="match status" value="1"/>
</dbReference>
<dbReference type="SUPFAM" id="SSF54695">
    <property type="entry name" value="POZ domain"/>
    <property type="match status" value="1"/>
</dbReference>
<dbReference type="PROSITE" id="PS50097">
    <property type="entry name" value="BTB"/>
    <property type="match status" value="1"/>
</dbReference>
<evidence type="ECO:0000250" key="1">
    <source>
        <dbReference type="UniProtKB" id="A2AUC9"/>
    </source>
</evidence>
<evidence type="ECO:0000250" key="2">
    <source>
        <dbReference type="UniProtKB" id="O60662"/>
    </source>
</evidence>
<evidence type="ECO:0000255" key="3"/>
<evidence type="ECO:0000255" key="4">
    <source>
        <dbReference type="PROSITE-ProRule" id="PRU00037"/>
    </source>
</evidence>
<evidence type="ECO:0000269" key="5">
    <source>
    </source>
</evidence>
<evidence type="ECO:0000312" key="6">
    <source>
        <dbReference type="ZFIN" id="ZDB-GENE-030131-9875"/>
    </source>
</evidence>
<reference key="1">
    <citation type="journal article" date="2013" name="Nature">
        <title>The zebrafish reference genome sequence and its relationship to the human genome.</title>
        <authorList>
            <person name="Howe K."/>
            <person name="Clark M.D."/>
            <person name="Torroja C.F."/>
            <person name="Torrance J."/>
            <person name="Berthelot C."/>
            <person name="Muffato M."/>
            <person name="Collins J.E."/>
            <person name="Humphray S."/>
            <person name="McLaren K."/>
            <person name="Matthews L."/>
            <person name="McLaren S."/>
            <person name="Sealy I."/>
            <person name="Caccamo M."/>
            <person name="Churcher C."/>
            <person name="Scott C."/>
            <person name="Barrett J.C."/>
            <person name="Koch R."/>
            <person name="Rauch G.J."/>
            <person name="White S."/>
            <person name="Chow W."/>
            <person name="Kilian B."/>
            <person name="Quintais L.T."/>
            <person name="Guerra-Assuncao J.A."/>
            <person name="Zhou Y."/>
            <person name="Gu Y."/>
            <person name="Yen J."/>
            <person name="Vogel J.H."/>
            <person name="Eyre T."/>
            <person name="Redmond S."/>
            <person name="Banerjee R."/>
            <person name="Chi J."/>
            <person name="Fu B."/>
            <person name="Langley E."/>
            <person name="Maguire S.F."/>
            <person name="Laird G.K."/>
            <person name="Lloyd D."/>
            <person name="Kenyon E."/>
            <person name="Donaldson S."/>
            <person name="Sehra H."/>
            <person name="Almeida-King J."/>
            <person name="Loveland J."/>
            <person name="Trevanion S."/>
            <person name="Jones M."/>
            <person name="Quail M."/>
            <person name="Willey D."/>
            <person name="Hunt A."/>
            <person name="Burton J."/>
            <person name="Sims S."/>
            <person name="McLay K."/>
            <person name="Plumb B."/>
            <person name="Davis J."/>
            <person name="Clee C."/>
            <person name="Oliver K."/>
            <person name="Clark R."/>
            <person name="Riddle C."/>
            <person name="Elliot D."/>
            <person name="Threadgold G."/>
            <person name="Harden G."/>
            <person name="Ware D."/>
            <person name="Begum S."/>
            <person name="Mortimore B."/>
            <person name="Kerry G."/>
            <person name="Heath P."/>
            <person name="Phillimore B."/>
            <person name="Tracey A."/>
            <person name="Corby N."/>
            <person name="Dunn M."/>
            <person name="Johnson C."/>
            <person name="Wood J."/>
            <person name="Clark S."/>
            <person name="Pelan S."/>
            <person name="Griffiths G."/>
            <person name="Smith M."/>
            <person name="Glithero R."/>
            <person name="Howden P."/>
            <person name="Barker N."/>
            <person name="Lloyd C."/>
            <person name="Stevens C."/>
            <person name="Harley J."/>
            <person name="Holt K."/>
            <person name="Panagiotidis G."/>
            <person name="Lovell J."/>
            <person name="Beasley H."/>
            <person name="Henderson C."/>
            <person name="Gordon D."/>
            <person name="Auger K."/>
            <person name="Wright D."/>
            <person name="Collins J."/>
            <person name="Raisen C."/>
            <person name="Dyer L."/>
            <person name="Leung K."/>
            <person name="Robertson L."/>
            <person name="Ambridge K."/>
            <person name="Leongamornlert D."/>
            <person name="McGuire S."/>
            <person name="Gilderthorp R."/>
            <person name="Griffiths C."/>
            <person name="Manthravadi D."/>
            <person name="Nichol S."/>
            <person name="Barker G."/>
            <person name="Whitehead S."/>
            <person name="Kay M."/>
            <person name="Brown J."/>
            <person name="Murnane C."/>
            <person name="Gray E."/>
            <person name="Humphries M."/>
            <person name="Sycamore N."/>
            <person name="Barker D."/>
            <person name="Saunders D."/>
            <person name="Wallis J."/>
            <person name="Babbage A."/>
            <person name="Hammond S."/>
            <person name="Mashreghi-Mohammadi M."/>
            <person name="Barr L."/>
            <person name="Martin S."/>
            <person name="Wray P."/>
            <person name="Ellington A."/>
            <person name="Matthews N."/>
            <person name="Ellwood M."/>
            <person name="Woodmansey R."/>
            <person name="Clark G."/>
            <person name="Cooper J."/>
            <person name="Tromans A."/>
            <person name="Grafham D."/>
            <person name="Skuce C."/>
            <person name="Pandian R."/>
            <person name="Andrews R."/>
            <person name="Harrison E."/>
            <person name="Kimberley A."/>
            <person name="Garnett J."/>
            <person name="Fosker N."/>
            <person name="Hall R."/>
            <person name="Garner P."/>
            <person name="Kelly D."/>
            <person name="Bird C."/>
            <person name="Palmer S."/>
            <person name="Gehring I."/>
            <person name="Berger A."/>
            <person name="Dooley C.M."/>
            <person name="Ersan-Urun Z."/>
            <person name="Eser C."/>
            <person name="Geiger H."/>
            <person name="Geisler M."/>
            <person name="Karotki L."/>
            <person name="Kirn A."/>
            <person name="Konantz J."/>
            <person name="Konantz M."/>
            <person name="Oberlander M."/>
            <person name="Rudolph-Geiger S."/>
            <person name="Teucke M."/>
            <person name="Lanz C."/>
            <person name="Raddatz G."/>
            <person name="Osoegawa K."/>
            <person name="Zhu B."/>
            <person name="Rapp A."/>
            <person name="Widaa S."/>
            <person name="Langford C."/>
            <person name="Yang F."/>
            <person name="Schuster S.C."/>
            <person name="Carter N.P."/>
            <person name="Harrow J."/>
            <person name="Ning Z."/>
            <person name="Herrero J."/>
            <person name="Searle S.M."/>
            <person name="Enright A."/>
            <person name="Geisler R."/>
            <person name="Plasterk R.H."/>
            <person name="Lee C."/>
            <person name="Westerfield M."/>
            <person name="de Jong P.J."/>
            <person name="Zon L.I."/>
            <person name="Postlethwait J.H."/>
            <person name="Nusslein-Volhard C."/>
            <person name="Hubbard T.J."/>
            <person name="Roest Crollius H."/>
            <person name="Rogers J."/>
            <person name="Stemple D.L."/>
        </authorList>
    </citation>
    <scope>NUCLEOTIDE SEQUENCE [LARGE SCALE GENOMIC DNA]</scope>
    <source>
        <strain>Tuebingen</strain>
    </source>
</reference>
<reference key="2">
    <citation type="submission" date="2003-07" db="EMBL/GenBank/DDBJ databases">
        <authorList>
            <consortium name="NIH - Zebrafish Gene Collection (ZGC) project"/>
        </authorList>
    </citation>
    <scope>NUCLEOTIDE SEQUENCE [LARGE SCALE MRNA]</scope>
    <source>
        <strain>AB</strain>
    </source>
</reference>
<reference key="3">
    <citation type="journal article" date="2013" name="Am. J. Hum. Genet.">
        <title>Identification of KLHL41 mutations implicates BTB-Kelch-mediated ubiquitination as an alternate pathway to myofibrillar disruption in nemaline myopathy.</title>
        <authorList>
            <person name="Gupta V.A."/>
            <person name="Ravenscroft G."/>
            <person name="Shaheen R."/>
            <person name="Todd E.J."/>
            <person name="Swanson L.C."/>
            <person name="Shiina M."/>
            <person name="Ogata K."/>
            <person name="Hsu C."/>
            <person name="Clarke N.F."/>
            <person name="Darras B.T."/>
            <person name="Farrar M.A."/>
            <person name="Hashem A."/>
            <person name="Manton N.D."/>
            <person name="Muntoni F."/>
            <person name="North K.N."/>
            <person name="Sandaradura S.A."/>
            <person name="Nishino I."/>
            <person name="Hayashi Y.K."/>
            <person name="Sewry C.A."/>
            <person name="Thompson E.M."/>
            <person name="Yau K.S."/>
            <person name="Brownstein C.A."/>
            <person name="Yu T.W."/>
            <person name="Allcock R.J."/>
            <person name="Davis M.R."/>
            <person name="Wallgren-Pettersson C."/>
            <person name="Matsumoto N."/>
            <person name="Alkuraya F.S."/>
            <person name="Laing N.G."/>
            <person name="Beggs A.H."/>
        </authorList>
    </citation>
    <scope>DISRUPTION PHENOTYPE</scope>
    <scope>FUNCTION</scope>
    <scope>DEVELOPMENTAL STAGE</scope>
</reference>
<gene>
    <name evidence="6" type="primary">klhl41b</name>
    <name evidence="6" type="synonym">kbtbd10b</name>
</gene>
<accession>F1QEG2</accession>
<accession>Q7SYD2</accession>
<proteinExistence type="evidence at transcript level"/>